<comment type="function">
    <text evidence="1 3">Component of antiviral defense system Septu type I, composed of PtuA and PtuB. Expression of Septu type I in B.subtilis (strain BEST7003) confers resistance to phages SBSphiC and SBSphiJ (PubMed:29371424). May be an ATPase (Probable).</text>
</comment>
<name>PTUA_BACTU</name>
<feature type="chain" id="PRO_0000456385" description="Septu protein PtuA">
    <location>
        <begin position="1"/>
        <end position="396"/>
    </location>
</feature>
<dbReference type="EMBL" id="CP014847">
    <property type="protein sequence ID" value="AMR85048.1"/>
    <property type="molecule type" value="Genomic_DNA"/>
</dbReference>
<dbReference type="RefSeq" id="WP_044798011.1">
    <property type="nucleotide sequence ID" value="NZ_VLJD01000076.1"/>
</dbReference>
<dbReference type="GO" id="GO:0005524">
    <property type="term" value="F:ATP binding"/>
    <property type="evidence" value="ECO:0007669"/>
    <property type="project" value="InterPro"/>
</dbReference>
<dbReference type="GO" id="GO:0016887">
    <property type="term" value="F:ATP hydrolysis activity"/>
    <property type="evidence" value="ECO:0007669"/>
    <property type="project" value="InterPro"/>
</dbReference>
<dbReference type="GO" id="GO:0051607">
    <property type="term" value="P:defense response to virus"/>
    <property type="evidence" value="ECO:0007669"/>
    <property type="project" value="UniProtKB-KW"/>
</dbReference>
<dbReference type="Gene3D" id="3.40.50.300">
    <property type="entry name" value="P-loop containing nucleotide triphosphate hydrolases"/>
    <property type="match status" value="1"/>
</dbReference>
<dbReference type="InterPro" id="IPR003593">
    <property type="entry name" value="AAA+_ATPase"/>
</dbReference>
<dbReference type="InterPro" id="IPR003959">
    <property type="entry name" value="ATPase_AAA_core"/>
</dbReference>
<dbReference type="InterPro" id="IPR051396">
    <property type="entry name" value="Bact_Antivir_Def_Nuclease"/>
</dbReference>
<dbReference type="InterPro" id="IPR027417">
    <property type="entry name" value="P-loop_NTPase"/>
</dbReference>
<dbReference type="PANTHER" id="PTHR43581">
    <property type="entry name" value="ATP/GTP PHOSPHATASE"/>
    <property type="match status" value="1"/>
</dbReference>
<dbReference type="PANTHER" id="PTHR43581:SF2">
    <property type="entry name" value="EXCINUCLEASE ATPASE SUBUNIT"/>
    <property type="match status" value="1"/>
</dbReference>
<dbReference type="Pfam" id="PF13304">
    <property type="entry name" value="AAA_21"/>
    <property type="match status" value="1"/>
</dbReference>
<dbReference type="SMART" id="SM00382">
    <property type="entry name" value="AAA"/>
    <property type="match status" value="1"/>
</dbReference>
<dbReference type="SUPFAM" id="SSF52540">
    <property type="entry name" value="P-loop containing nucleoside triphosphate hydrolases"/>
    <property type="match status" value="1"/>
</dbReference>
<reference key="1">
    <citation type="submission" date="2016-03" db="EMBL/GenBank/DDBJ databases">
        <title>Complete Genome Sequence of Bacillus thuringiensis HD12.</title>
        <authorList>
            <person name="Shu C."/>
        </authorList>
    </citation>
    <scope>NUCLEOTIDE SEQUENCE [LARGE SCALE GENOMIC DNA]</scope>
    <source>
        <strain>HD12</strain>
    </source>
</reference>
<reference key="2">
    <citation type="journal article" date="2018" name="Science">
        <title>Systematic discovery of antiphage defense systems in the microbial pangenome.</title>
        <authorList>
            <person name="Doron S."/>
            <person name="Melamed S."/>
            <person name="Ofir G."/>
            <person name="Leavitt A."/>
            <person name="Lopatina A."/>
            <person name="Keren M."/>
            <person name="Amitai G."/>
            <person name="Sorek R."/>
        </authorList>
    </citation>
    <scope>FUNCTION</scope>
    <scope>EXPRESSION IN B.SUBTILIS</scope>
    <source>
        <strain>HD12</strain>
    </source>
</reference>
<keyword id="KW-0051">Antiviral defense</keyword>
<keyword id="KW-0378">Hydrolase</keyword>
<protein>
    <recommendedName>
        <fullName evidence="2">Septu protein PtuA</fullName>
    </recommendedName>
    <alternativeName>
        <fullName evidence="3">Putative ATPase PtuA</fullName>
    </alternativeName>
</protein>
<gene>
    <name evidence="2" type="primary">ptuA</name>
    <name evidence="4" type="ORF">A3L20_13820</name>
</gene>
<sequence length="396" mass="45319">MLVIKELKIDGIGGINSLKLNFNEGLNLICGPNGVGKTTILESIGHMFSNGSRSKVKRNVKFDQGSCEISYSTFLDTIHTQSCILRNYEENDSLDWHGGNANLAKEVIVFKAQRSFTYTQLDSLRKDTETSDGKFLDDSMNGIQFFDFKNWFIHRFLFSHVDNELTTVQKENFKLATDCFGILDNSIRFSSVKSDTFDIIISTSNGEIYFEYLSSGFKSCIYIIHGLIKEIEYRFKNDGGIKVQDYEGLILIDELDLHLHPQWQAKMIYLIKHILPKAQIIATTHSPHMVQAAAINELIALGIDEDADVYVRQLPNVQYGFQGWTVEEILEDVMGLDETRSPMYIEAITEFEKSLDEENEEKIFEAYYKLDLMLHPSNPLRKLLKLQVAQFGRVIE</sequence>
<accession>P0DW41</accession>
<proteinExistence type="predicted"/>
<organism>
    <name type="scientific">Bacillus thuringiensis</name>
    <dbReference type="NCBI Taxonomy" id="1428"/>
    <lineage>
        <taxon>Bacteria</taxon>
        <taxon>Bacillati</taxon>
        <taxon>Bacillota</taxon>
        <taxon>Bacilli</taxon>
        <taxon>Bacillales</taxon>
        <taxon>Bacillaceae</taxon>
        <taxon>Bacillus</taxon>
        <taxon>Bacillus cereus group</taxon>
    </lineage>
</organism>
<evidence type="ECO:0000269" key="1">
    <source>
    </source>
</evidence>
<evidence type="ECO:0000303" key="2">
    <source>
    </source>
</evidence>
<evidence type="ECO:0000305" key="3">
    <source>
    </source>
</evidence>
<evidence type="ECO:0000312" key="4">
    <source>
        <dbReference type="EMBL" id="AMR85048.1"/>
    </source>
</evidence>